<organism>
    <name type="scientific">Arabidopsis thaliana</name>
    <name type="common">Mouse-ear cress</name>
    <dbReference type="NCBI Taxonomy" id="3702"/>
    <lineage>
        <taxon>Eukaryota</taxon>
        <taxon>Viridiplantae</taxon>
        <taxon>Streptophyta</taxon>
        <taxon>Embryophyta</taxon>
        <taxon>Tracheophyta</taxon>
        <taxon>Spermatophyta</taxon>
        <taxon>Magnoliopsida</taxon>
        <taxon>eudicotyledons</taxon>
        <taxon>Gunneridae</taxon>
        <taxon>Pentapetalae</taxon>
        <taxon>rosids</taxon>
        <taxon>malvids</taxon>
        <taxon>Brassicales</taxon>
        <taxon>Brassicaceae</taxon>
        <taxon>Camelineae</taxon>
        <taxon>Arabidopsis</taxon>
    </lineage>
</organism>
<protein>
    <recommendedName>
        <fullName>Terpenoid synthase 29</fullName>
        <shortName>AtTPS29</shortName>
        <ecNumber>4.2.3.-</ecNumber>
    </recommendedName>
</protein>
<sequence>MEAIRIGFGLPNVHSVPLCLTTTRCLFPRQRLLHSHTPSWKPAKQQDFFVASSSKKSSDDLESSLPTPHFSPSLWGDHFLSVSLNRAEFDELEREIETTKPLARDKLMSSESSDKEKIRLIHLLVSMGISYHFDKEIQDILKHSFTKLDDIIVGEDDLETISIMFEVFKLYGHKMSCDAFDRFRGNDGRFKESLVRDFRGMLQLFEVAHLGTPCEVIMDEALSFTRNHLESLTSGNASTASPHLLKHIQNSLYIPRYCNIEVLVAREYISYYEQEEGHDEILLKFAKLNFNFCQFHYVQELKTLTKWWRDLDLASKLPYIRDRLVESHLVALGPYFEPHYSLGRIIVAKINMIMVVVDDTYDAYATLPQVKALTECLQRWSIEVSDKLPDYLRIVLGSLFDVMGEIEREMRPLGRLYRVKQVVEKIKIITKAYQEIAKWARTGHVSTFDEYMKVGVLTAGMADYAAYCFIGMEDINEKEAFEWLNSNPLIIKHLTAMFRLANDVGTYETEINRGEVANGLNCYMKQYGVTKEEASRELRKMYVYRKKVVVEEFMNSHDHVPRQVLLRCLNIARIFDVFYTEGDGYSEPKGKIEHFMTSLYLHPIPLS</sequence>
<evidence type="ECO:0000250" key="1"/>
<evidence type="ECO:0000269" key="2">
    <source>
    </source>
</evidence>
<evidence type="ECO:0000305" key="3"/>
<reference key="1">
    <citation type="journal article" date="2000" name="Nature">
        <title>Sequence and analysis of chromosome 1 of the plant Arabidopsis thaliana.</title>
        <authorList>
            <person name="Theologis A."/>
            <person name="Ecker J.R."/>
            <person name="Palm C.J."/>
            <person name="Federspiel N.A."/>
            <person name="Kaul S."/>
            <person name="White O."/>
            <person name="Alonso J."/>
            <person name="Altafi H."/>
            <person name="Araujo R."/>
            <person name="Bowman C.L."/>
            <person name="Brooks S.Y."/>
            <person name="Buehler E."/>
            <person name="Chan A."/>
            <person name="Chao Q."/>
            <person name="Chen H."/>
            <person name="Cheuk R.F."/>
            <person name="Chin C.W."/>
            <person name="Chung M.K."/>
            <person name="Conn L."/>
            <person name="Conway A.B."/>
            <person name="Conway A.R."/>
            <person name="Creasy T.H."/>
            <person name="Dewar K."/>
            <person name="Dunn P."/>
            <person name="Etgu P."/>
            <person name="Feldblyum T.V."/>
            <person name="Feng J.-D."/>
            <person name="Fong B."/>
            <person name="Fujii C.Y."/>
            <person name="Gill J.E."/>
            <person name="Goldsmith A.D."/>
            <person name="Haas B."/>
            <person name="Hansen N.F."/>
            <person name="Hughes B."/>
            <person name="Huizar L."/>
            <person name="Hunter J.L."/>
            <person name="Jenkins J."/>
            <person name="Johnson-Hopson C."/>
            <person name="Khan S."/>
            <person name="Khaykin E."/>
            <person name="Kim C.J."/>
            <person name="Koo H.L."/>
            <person name="Kremenetskaia I."/>
            <person name="Kurtz D.B."/>
            <person name="Kwan A."/>
            <person name="Lam B."/>
            <person name="Langin-Hooper S."/>
            <person name="Lee A."/>
            <person name="Lee J.M."/>
            <person name="Lenz C.A."/>
            <person name="Li J.H."/>
            <person name="Li Y.-P."/>
            <person name="Lin X."/>
            <person name="Liu S.X."/>
            <person name="Liu Z.A."/>
            <person name="Luros J.S."/>
            <person name="Maiti R."/>
            <person name="Marziali A."/>
            <person name="Militscher J."/>
            <person name="Miranda M."/>
            <person name="Nguyen M."/>
            <person name="Nierman W.C."/>
            <person name="Osborne B.I."/>
            <person name="Pai G."/>
            <person name="Peterson J."/>
            <person name="Pham P.K."/>
            <person name="Rizzo M."/>
            <person name="Rooney T."/>
            <person name="Rowley D."/>
            <person name="Sakano H."/>
            <person name="Salzberg S.L."/>
            <person name="Schwartz J.R."/>
            <person name="Shinn P."/>
            <person name="Southwick A.M."/>
            <person name="Sun H."/>
            <person name="Tallon L.J."/>
            <person name="Tambunga G."/>
            <person name="Toriumi M.J."/>
            <person name="Town C.D."/>
            <person name="Utterback T."/>
            <person name="Van Aken S."/>
            <person name="Vaysberg M."/>
            <person name="Vysotskaia V.S."/>
            <person name="Walker M."/>
            <person name="Wu D."/>
            <person name="Yu G."/>
            <person name="Fraser C.M."/>
            <person name="Venter J.C."/>
            <person name="Davis R.W."/>
        </authorList>
    </citation>
    <scope>NUCLEOTIDE SEQUENCE [LARGE SCALE GENOMIC DNA]</scope>
    <source>
        <strain>cv. Columbia</strain>
    </source>
</reference>
<reference key="2">
    <citation type="journal article" date="2017" name="Plant J.">
        <title>Araport11: a complete reannotation of the Arabidopsis thaliana reference genome.</title>
        <authorList>
            <person name="Cheng C.Y."/>
            <person name="Krishnakumar V."/>
            <person name="Chan A.P."/>
            <person name="Thibaud-Nissen F."/>
            <person name="Schobel S."/>
            <person name="Town C.D."/>
        </authorList>
    </citation>
    <scope>GENOME REANNOTATION</scope>
    <source>
        <strain>cv. Columbia</strain>
    </source>
</reference>
<reference key="3">
    <citation type="journal article" date="2002" name="Mol. Genet. Genomics">
        <title>Genomic analysis of the terpenoid synthase (AtTPS) gene family of Arabidopsis thaliana.</title>
        <authorList>
            <person name="Aubourg S."/>
            <person name="Lecharny A."/>
            <person name="Bohlmann J."/>
        </authorList>
    </citation>
    <scope>GENE FAMILY</scope>
    <scope>NOMENCLATURE</scope>
</reference>
<reference key="4">
    <citation type="journal article" date="2003" name="Plant Cell">
        <title>Biosynthesis and emission of terpenoid volatiles from Arabidopsis flowers.</title>
        <authorList>
            <person name="Chen F."/>
            <person name="Tholl D."/>
            <person name="D'Auria J.C."/>
            <person name="Farooq A."/>
            <person name="Pichersky E."/>
            <person name="Gershenzon J."/>
        </authorList>
    </citation>
    <scope>TISSUE SPECIFICITY</scope>
</reference>
<reference key="5">
    <citation type="journal article" date="2003" name="Plant Mol. Biol.">
        <title>Genome organization in Arabidopsis thaliana: a survey for genes involved in isoprenoid and chlorophyll metabolism.</title>
        <authorList>
            <person name="Lange B.M."/>
            <person name="Ghassemian M."/>
        </authorList>
    </citation>
    <scope>GENE FAMILY</scope>
</reference>
<comment type="cofactor">
    <cofactor evidence="1">
        <name>Mg(2+)</name>
        <dbReference type="ChEBI" id="CHEBI:18420"/>
    </cofactor>
    <cofactor evidence="1">
        <name>Mn(2+)</name>
        <dbReference type="ChEBI" id="CHEBI:29035"/>
    </cofactor>
    <text evidence="1">Binds 3 Mg(2+) or Mn(2+) ions per subunit.</text>
</comment>
<comment type="pathway">
    <text>Secondary metabolite biosynthesis; terpenoid biosynthesis.</text>
</comment>
<comment type="subcellular location">
    <subcellularLocation>
        <location evidence="3">Cytoplasm</location>
    </subcellularLocation>
</comment>
<comment type="tissue specificity">
    <text evidence="2">Predominantly expressed in flowers but also in siliques, roots, leaves and stems.</text>
</comment>
<comment type="domain">
    <text>The Asp-Asp-Xaa-Xaa-Asp/Glu (DDXXD/E) motif is important for the catalytic activity, presumably through binding to Mg(2+).</text>
</comment>
<comment type="similarity">
    <text evidence="3">Belongs to the terpene synthase family. Tpsa subfamily.</text>
</comment>
<comment type="sequence caution" evidence="3">
    <conflict type="erroneous gene model prediction">
        <sequence resource="EMBL-CDS" id="AAG50729"/>
    </conflict>
</comment>
<comment type="sequence caution" evidence="3">
    <conflict type="erroneous gene model prediction">
        <sequence resource="EMBL-CDS" id="AAG50788"/>
    </conflict>
</comment>
<feature type="chain" id="PRO_0000403716" description="Terpenoid synthase 29">
    <location>
        <begin position="1"/>
        <end position="607"/>
    </location>
</feature>
<feature type="short sequence motif" description="DDXXD motif">
    <location>
        <begin position="358"/>
        <end position="362"/>
    </location>
</feature>
<feature type="binding site" evidence="1">
    <location>
        <position position="358"/>
    </location>
    <ligand>
        <name>Mg(2+)</name>
        <dbReference type="ChEBI" id="CHEBI:18420"/>
        <label>1</label>
    </ligand>
</feature>
<feature type="binding site" evidence="1">
    <location>
        <position position="358"/>
    </location>
    <ligand>
        <name>Mg(2+)</name>
        <dbReference type="ChEBI" id="CHEBI:18420"/>
        <label>2</label>
    </ligand>
</feature>
<feature type="binding site" evidence="1">
    <location>
        <position position="362"/>
    </location>
    <ligand>
        <name>Mg(2+)</name>
        <dbReference type="ChEBI" id="CHEBI:18420"/>
        <label>1</label>
    </ligand>
</feature>
<feature type="binding site" evidence="1">
    <location>
        <position position="362"/>
    </location>
    <ligand>
        <name>Mg(2+)</name>
        <dbReference type="ChEBI" id="CHEBI:18420"/>
        <label>2</label>
    </ligand>
</feature>
<feature type="binding site" evidence="1">
    <location>
        <position position="502"/>
    </location>
    <ligand>
        <name>Mg(2+)</name>
        <dbReference type="ChEBI" id="CHEBI:18420"/>
        <label>3</label>
    </ligand>
</feature>
<feature type="binding site" evidence="1">
    <location>
        <position position="506"/>
    </location>
    <ligand>
        <name>Mg(2+)</name>
        <dbReference type="ChEBI" id="CHEBI:18420"/>
        <label>3</label>
    </ligand>
</feature>
<feature type="binding site" evidence="1">
    <location>
        <position position="510"/>
    </location>
    <ligand>
        <name>Mg(2+)</name>
        <dbReference type="ChEBI" id="CHEBI:18420"/>
        <label>3</label>
    </ligand>
</feature>
<keyword id="KW-0963">Cytoplasm</keyword>
<keyword id="KW-0456">Lyase</keyword>
<keyword id="KW-0460">Magnesium</keyword>
<keyword id="KW-0464">Manganese</keyword>
<keyword id="KW-0479">Metal-binding</keyword>
<keyword id="KW-1185">Reference proteome</keyword>
<name>TPS29_ARATH</name>
<dbReference type="EC" id="4.2.3.-"/>
<dbReference type="EMBL" id="AC074309">
    <property type="protein sequence ID" value="AAG50788.1"/>
    <property type="status" value="ALT_SEQ"/>
    <property type="molecule type" value="Genomic_DNA"/>
</dbReference>
<dbReference type="EMBL" id="AC079041">
    <property type="protein sequence ID" value="AAG50729.1"/>
    <property type="status" value="ALT_SEQ"/>
    <property type="molecule type" value="Genomic_DNA"/>
</dbReference>
<dbReference type="EMBL" id="CP002684">
    <property type="protein sequence ID" value="AEE31421.2"/>
    <property type="molecule type" value="Genomic_DNA"/>
</dbReference>
<dbReference type="PIR" id="G86443">
    <property type="entry name" value="G86443"/>
</dbReference>
<dbReference type="RefSeq" id="NP_001319127.1">
    <property type="nucleotide sequence ID" value="NM_001332991.1"/>
</dbReference>
<dbReference type="RefSeq" id="NP_001320348.1">
    <property type="nucleotide sequence ID" value="NM_001332993.1"/>
</dbReference>
<dbReference type="SMR" id="Q9C6W6"/>
<dbReference type="FunCoup" id="Q9C6W6">
    <property type="interactions" value="22"/>
</dbReference>
<dbReference type="STRING" id="3702.Q9C6W6"/>
<dbReference type="iPTMnet" id="Q9C6W6"/>
<dbReference type="PaxDb" id="3702-AT1G31950.1"/>
<dbReference type="EnsemblPlants" id="AT1G31950.1">
    <property type="protein sequence ID" value="AT1G31950.1"/>
    <property type="gene ID" value="AT1G31950"/>
</dbReference>
<dbReference type="GeneID" id="840085"/>
<dbReference type="Gramene" id="AT1G31950.1">
    <property type="protein sequence ID" value="AT1G31950.1"/>
    <property type="gene ID" value="AT1G31950"/>
</dbReference>
<dbReference type="KEGG" id="ath:AT1G31950"/>
<dbReference type="Araport" id="AT1G31950"/>
<dbReference type="TAIR" id="AT1G31950"/>
<dbReference type="eggNOG" id="ENOG502SHPY">
    <property type="taxonomic scope" value="Eukaryota"/>
</dbReference>
<dbReference type="HOGENOM" id="CLU_003125_7_2_1"/>
<dbReference type="InParanoid" id="Q9C6W6"/>
<dbReference type="OMA" id="QSWIMER"/>
<dbReference type="PhylomeDB" id="Q9C6W6"/>
<dbReference type="UniPathway" id="UPA00213"/>
<dbReference type="PRO" id="PR:Q9C6W6"/>
<dbReference type="Proteomes" id="UP000006548">
    <property type="component" value="Chromosome 1"/>
</dbReference>
<dbReference type="ExpressionAtlas" id="Q9C6W6">
    <property type="expression patterns" value="baseline and differential"/>
</dbReference>
<dbReference type="GO" id="GO:0005737">
    <property type="term" value="C:cytoplasm"/>
    <property type="evidence" value="ECO:0007669"/>
    <property type="project" value="UniProtKB-SubCell"/>
</dbReference>
<dbReference type="GO" id="GO:0000287">
    <property type="term" value="F:magnesium ion binding"/>
    <property type="evidence" value="ECO:0007669"/>
    <property type="project" value="InterPro"/>
</dbReference>
<dbReference type="GO" id="GO:0010333">
    <property type="term" value="F:terpene synthase activity"/>
    <property type="evidence" value="ECO:0007669"/>
    <property type="project" value="InterPro"/>
</dbReference>
<dbReference type="GO" id="GO:0016102">
    <property type="term" value="P:diterpenoid biosynthetic process"/>
    <property type="evidence" value="ECO:0007669"/>
    <property type="project" value="InterPro"/>
</dbReference>
<dbReference type="CDD" id="cd00684">
    <property type="entry name" value="Terpene_cyclase_plant_C1"/>
    <property type="match status" value="1"/>
</dbReference>
<dbReference type="FunFam" id="1.10.600.10:FF:000007">
    <property type="entry name" value="Isoprene synthase, chloroplastic"/>
    <property type="match status" value="1"/>
</dbReference>
<dbReference type="FunFam" id="1.50.10.130:FF:000001">
    <property type="entry name" value="Isoprene synthase, chloroplastic"/>
    <property type="match status" value="1"/>
</dbReference>
<dbReference type="Gene3D" id="1.10.600.10">
    <property type="entry name" value="Farnesyl Diphosphate Synthase"/>
    <property type="match status" value="1"/>
</dbReference>
<dbReference type="Gene3D" id="1.50.10.130">
    <property type="entry name" value="Terpene synthase, N-terminal domain"/>
    <property type="match status" value="1"/>
</dbReference>
<dbReference type="InterPro" id="IPR008949">
    <property type="entry name" value="Isoprenoid_synthase_dom_sf"/>
</dbReference>
<dbReference type="InterPro" id="IPR034741">
    <property type="entry name" value="Terpene_cyclase-like_1_C"/>
</dbReference>
<dbReference type="InterPro" id="IPR044814">
    <property type="entry name" value="Terpene_cyclase_plant_C1"/>
</dbReference>
<dbReference type="InterPro" id="IPR001906">
    <property type="entry name" value="Terpene_synth_N"/>
</dbReference>
<dbReference type="InterPro" id="IPR036965">
    <property type="entry name" value="Terpene_synth_N_sf"/>
</dbReference>
<dbReference type="InterPro" id="IPR050148">
    <property type="entry name" value="Terpene_synthase-like"/>
</dbReference>
<dbReference type="InterPro" id="IPR005630">
    <property type="entry name" value="Terpene_synthase_metal-bd"/>
</dbReference>
<dbReference type="InterPro" id="IPR008930">
    <property type="entry name" value="Terpenoid_cyclase/PrenylTrfase"/>
</dbReference>
<dbReference type="PANTHER" id="PTHR31225:SF93">
    <property type="entry name" value="ALPHA-HUMULENE_(-)-(E)-BETA-CARYOPHYLLENE SYNTHASE"/>
    <property type="match status" value="1"/>
</dbReference>
<dbReference type="PANTHER" id="PTHR31225">
    <property type="entry name" value="OS04G0344100 PROTEIN-RELATED"/>
    <property type="match status" value="1"/>
</dbReference>
<dbReference type="Pfam" id="PF01397">
    <property type="entry name" value="Terpene_synth"/>
    <property type="match status" value="1"/>
</dbReference>
<dbReference type="Pfam" id="PF03936">
    <property type="entry name" value="Terpene_synth_C"/>
    <property type="match status" value="1"/>
</dbReference>
<dbReference type="SFLD" id="SFLDS00005">
    <property type="entry name" value="Isoprenoid_Synthase_Type_I"/>
    <property type="match status" value="1"/>
</dbReference>
<dbReference type="SFLD" id="SFLDG01019">
    <property type="entry name" value="Terpene_Cyclase_Like_1_C_Termi"/>
    <property type="match status" value="1"/>
</dbReference>
<dbReference type="SUPFAM" id="SSF48239">
    <property type="entry name" value="Terpenoid cyclases/Protein prenyltransferases"/>
    <property type="match status" value="1"/>
</dbReference>
<dbReference type="SUPFAM" id="SSF48576">
    <property type="entry name" value="Terpenoid synthases"/>
    <property type="match status" value="1"/>
</dbReference>
<gene>
    <name type="primary">TPS29</name>
    <name type="ordered locus">At1g31950</name>
    <name type="ORF">F5M6.5</name>
    <name type="ORF">T12O21.14</name>
</gene>
<accession>Q9C6W6</accession>
<accession>F4IB08</accession>
<accession>Q9C6T3</accession>
<proteinExistence type="evidence at transcript level"/>